<keyword id="KW-0963">Cytoplasm</keyword>
<keyword id="KW-0274">FAD</keyword>
<keyword id="KW-0285">Flavoprotein</keyword>
<keyword id="KW-0520">NAD</keyword>
<keyword id="KW-1185">Reference proteome</keyword>
<keyword id="KW-0819">tRNA processing</keyword>
<sequence length="636" mass="69431">MSSAEALAFDVIVIGGGHAGCEAASAAARAGARTALVTHRFDTIGVMSCNPAIGGLGKGHLVREIDALDGLMGRVADRAGIQFRLLNRRKGPAVRGPRTQADRKLYRLAMQQMITEQENLTVVEGGAADLVCDGERISGVTLADGRVLKCGAVVLTTGTFLNGLIHIGEKRFPAGRMGEKPALGLSERLLSFGFTLGRLKTGTPPRLDGRTIDWQSLDMQSADEEPVPFSLMTDRITTPQIECGITRTTPETHDIIRANLHRSAMYSGSIEGIGPRYCPSVEDKIVKFGDRDGHQIFLEPEGLDDDTVYPNGISTSLPEDVQLEILKTIPGLEKAVLLQPGYAIEYDFIDPRELKRSLETRKVCGLFLAGQINGTTGYEEAGAQGLLAGLNAARRAAGSEPVILQRTEAYIGVMVDDLTSRGVSEPYRMFTSRAEFRLSLRADNADQRLTPLADEVGILSKERRKRYLTRETALSHARMVTQSLSITPNLAGYYDLRLNQDGVRRSAYDLLSYPDINLDRLIAIWPELASIDPVTREALEIEAQYAVYMERQQSDIAVMEREERLLIPSGLDFDAISGLSNELKQKLKQRKPETIAEAQRVDGMTPAAVALLIAQIRKFGGRQKLAAETLEGKGAA</sequence>
<feature type="chain" id="PRO_1000076309" description="tRNA uridine 5-carboxymethylaminomethyl modification enzyme MnmG">
    <location>
        <begin position="1"/>
        <end position="636"/>
    </location>
</feature>
<feature type="binding site" evidence="1">
    <location>
        <begin position="15"/>
        <end position="20"/>
    </location>
    <ligand>
        <name>FAD</name>
        <dbReference type="ChEBI" id="CHEBI:57692"/>
    </ligand>
</feature>
<feature type="binding site" evidence="1">
    <location>
        <begin position="274"/>
        <end position="288"/>
    </location>
    <ligand>
        <name>NAD(+)</name>
        <dbReference type="ChEBI" id="CHEBI:57540"/>
    </ligand>
</feature>
<evidence type="ECO:0000255" key="1">
    <source>
        <dbReference type="HAMAP-Rule" id="MF_00129"/>
    </source>
</evidence>
<reference key="1">
    <citation type="submission" date="2007-10" db="EMBL/GenBank/DDBJ databases">
        <title>Brucella canis ATCC 23365 whole genome shotgun sequencing project.</title>
        <authorList>
            <person name="Setubal J.C."/>
            <person name="Bowns C."/>
            <person name="Boyle S."/>
            <person name="Crasta O.R."/>
            <person name="Czar M.J."/>
            <person name="Dharmanolla C."/>
            <person name="Gillespie J.J."/>
            <person name="Kenyon R.W."/>
            <person name="Lu J."/>
            <person name="Mane S."/>
            <person name="Mohapatra S."/>
            <person name="Nagrani S."/>
            <person name="Purkayastha A."/>
            <person name="Rajasimha H.K."/>
            <person name="Shallom J.M."/>
            <person name="Shallom S."/>
            <person name="Shukla M."/>
            <person name="Snyder E.E."/>
            <person name="Sobral B.W."/>
            <person name="Wattam A.R."/>
            <person name="Will R."/>
            <person name="Williams K."/>
            <person name="Yoo H."/>
            <person name="Bruce D."/>
            <person name="Detter C."/>
            <person name="Munk C."/>
            <person name="Brettin T.S."/>
        </authorList>
    </citation>
    <scope>NUCLEOTIDE SEQUENCE [LARGE SCALE GENOMIC DNA]</scope>
    <source>
        <strain>ATCC 23365 / NCTC 10854 / RM-666</strain>
    </source>
</reference>
<accession>A9M9E4</accession>
<comment type="function">
    <text evidence="1">NAD-binding protein involved in the addition of a carboxymethylaminomethyl (cmnm) group at the wobble position (U34) of certain tRNAs, forming tRNA-cmnm(5)s(2)U34.</text>
</comment>
<comment type="cofactor">
    <cofactor evidence="1">
        <name>FAD</name>
        <dbReference type="ChEBI" id="CHEBI:57692"/>
    </cofactor>
</comment>
<comment type="subunit">
    <text evidence="1">Homodimer. Heterotetramer of two MnmE and two MnmG subunits.</text>
</comment>
<comment type="subcellular location">
    <subcellularLocation>
        <location evidence="1">Cytoplasm</location>
    </subcellularLocation>
</comment>
<comment type="similarity">
    <text evidence="1">Belongs to the MnmG family.</text>
</comment>
<dbReference type="EMBL" id="CP000872">
    <property type="protein sequence ID" value="ABX63091.1"/>
    <property type="molecule type" value="Genomic_DNA"/>
</dbReference>
<dbReference type="RefSeq" id="WP_006132991.1">
    <property type="nucleotide sequence ID" value="NC_010103.1"/>
</dbReference>
<dbReference type="SMR" id="A9M9E4"/>
<dbReference type="GeneID" id="55591631"/>
<dbReference type="KEGG" id="bcs:BCAN_A2107"/>
<dbReference type="HOGENOM" id="CLU_007831_2_2_5"/>
<dbReference type="PhylomeDB" id="A9M9E4"/>
<dbReference type="Proteomes" id="UP000001385">
    <property type="component" value="Chromosome I"/>
</dbReference>
<dbReference type="GO" id="GO:0005829">
    <property type="term" value="C:cytosol"/>
    <property type="evidence" value="ECO:0007669"/>
    <property type="project" value="TreeGrafter"/>
</dbReference>
<dbReference type="GO" id="GO:0050660">
    <property type="term" value="F:flavin adenine dinucleotide binding"/>
    <property type="evidence" value="ECO:0007669"/>
    <property type="project" value="UniProtKB-UniRule"/>
</dbReference>
<dbReference type="GO" id="GO:0030488">
    <property type="term" value="P:tRNA methylation"/>
    <property type="evidence" value="ECO:0007669"/>
    <property type="project" value="TreeGrafter"/>
</dbReference>
<dbReference type="GO" id="GO:0002098">
    <property type="term" value="P:tRNA wobble uridine modification"/>
    <property type="evidence" value="ECO:0007669"/>
    <property type="project" value="InterPro"/>
</dbReference>
<dbReference type="FunFam" id="3.50.50.60:FF:000145">
    <property type="entry name" value="tRNA uridine 5-carboxymethylaminomethyl modification enzyme"/>
    <property type="match status" value="1"/>
</dbReference>
<dbReference type="FunFam" id="1.10.150.570:FF:000001">
    <property type="entry name" value="tRNA uridine 5-carboxymethylaminomethyl modification enzyme MnmG"/>
    <property type="match status" value="1"/>
</dbReference>
<dbReference type="FunFam" id="3.50.50.60:FF:000002">
    <property type="entry name" value="tRNA uridine 5-carboxymethylaminomethyl modification enzyme MnmG"/>
    <property type="match status" value="1"/>
</dbReference>
<dbReference type="Gene3D" id="3.50.50.60">
    <property type="entry name" value="FAD/NAD(P)-binding domain"/>
    <property type="match status" value="2"/>
</dbReference>
<dbReference type="Gene3D" id="1.10.150.570">
    <property type="entry name" value="GidA associated domain, C-terminal subdomain"/>
    <property type="match status" value="1"/>
</dbReference>
<dbReference type="Gene3D" id="1.10.10.1800">
    <property type="entry name" value="tRNA uridine 5-carboxymethylaminomethyl modification enzyme MnmG/GidA"/>
    <property type="match status" value="1"/>
</dbReference>
<dbReference type="HAMAP" id="MF_00129">
    <property type="entry name" value="MnmG_GidA"/>
    <property type="match status" value="1"/>
</dbReference>
<dbReference type="InterPro" id="IPR036188">
    <property type="entry name" value="FAD/NAD-bd_sf"/>
</dbReference>
<dbReference type="InterPro" id="IPR049312">
    <property type="entry name" value="GIDA_C_N"/>
</dbReference>
<dbReference type="InterPro" id="IPR004416">
    <property type="entry name" value="MnmG"/>
</dbReference>
<dbReference type="InterPro" id="IPR002218">
    <property type="entry name" value="MnmG-rel"/>
</dbReference>
<dbReference type="InterPro" id="IPR020595">
    <property type="entry name" value="MnmG-rel_CS"/>
</dbReference>
<dbReference type="InterPro" id="IPR026904">
    <property type="entry name" value="MnmG_C"/>
</dbReference>
<dbReference type="InterPro" id="IPR047001">
    <property type="entry name" value="MnmG_C_subdom"/>
</dbReference>
<dbReference type="InterPro" id="IPR044920">
    <property type="entry name" value="MnmG_C_subdom_sf"/>
</dbReference>
<dbReference type="InterPro" id="IPR040131">
    <property type="entry name" value="MnmG_N"/>
</dbReference>
<dbReference type="NCBIfam" id="TIGR00136">
    <property type="entry name" value="mnmG_gidA"/>
    <property type="match status" value="1"/>
</dbReference>
<dbReference type="PANTHER" id="PTHR11806">
    <property type="entry name" value="GLUCOSE INHIBITED DIVISION PROTEIN A"/>
    <property type="match status" value="1"/>
</dbReference>
<dbReference type="PANTHER" id="PTHR11806:SF0">
    <property type="entry name" value="PROTEIN MTO1 HOMOLOG, MITOCHONDRIAL"/>
    <property type="match status" value="1"/>
</dbReference>
<dbReference type="Pfam" id="PF01134">
    <property type="entry name" value="GIDA"/>
    <property type="match status" value="1"/>
</dbReference>
<dbReference type="Pfam" id="PF21680">
    <property type="entry name" value="GIDA_C_1st"/>
    <property type="match status" value="1"/>
</dbReference>
<dbReference type="Pfam" id="PF13932">
    <property type="entry name" value="SAM_GIDA_C"/>
    <property type="match status" value="1"/>
</dbReference>
<dbReference type="SMART" id="SM01228">
    <property type="entry name" value="GIDA_assoc_3"/>
    <property type="match status" value="1"/>
</dbReference>
<dbReference type="SUPFAM" id="SSF51905">
    <property type="entry name" value="FAD/NAD(P)-binding domain"/>
    <property type="match status" value="1"/>
</dbReference>
<dbReference type="PROSITE" id="PS01280">
    <property type="entry name" value="GIDA_1"/>
    <property type="match status" value="1"/>
</dbReference>
<dbReference type="PROSITE" id="PS01281">
    <property type="entry name" value="GIDA_2"/>
    <property type="match status" value="1"/>
</dbReference>
<organism>
    <name type="scientific">Brucella canis (strain ATCC 23365 / NCTC 10854 / RM-666)</name>
    <dbReference type="NCBI Taxonomy" id="483179"/>
    <lineage>
        <taxon>Bacteria</taxon>
        <taxon>Pseudomonadati</taxon>
        <taxon>Pseudomonadota</taxon>
        <taxon>Alphaproteobacteria</taxon>
        <taxon>Hyphomicrobiales</taxon>
        <taxon>Brucellaceae</taxon>
        <taxon>Brucella/Ochrobactrum group</taxon>
        <taxon>Brucella</taxon>
    </lineage>
</organism>
<protein>
    <recommendedName>
        <fullName evidence="1">tRNA uridine 5-carboxymethylaminomethyl modification enzyme MnmG</fullName>
    </recommendedName>
    <alternativeName>
        <fullName evidence="1">Glucose-inhibited division protein A</fullName>
    </alternativeName>
</protein>
<gene>
    <name evidence="1" type="primary">mnmG</name>
    <name evidence="1" type="synonym">gidA</name>
    <name type="ordered locus">BCAN_A2107</name>
</gene>
<name>MNMG_BRUC2</name>
<proteinExistence type="inferred from homology"/>